<gene>
    <name evidence="8" type="primary">PDLP6</name>
    <name evidence="7" type="synonym">CRRSP12</name>
    <name type="ordered locus">At2g01660</name>
    <name type="ORF">T8O11.17</name>
</gene>
<reference key="1">
    <citation type="journal article" date="1999" name="Nature">
        <title>Sequence and analysis of chromosome 2 of the plant Arabidopsis thaliana.</title>
        <authorList>
            <person name="Lin X."/>
            <person name="Kaul S."/>
            <person name="Rounsley S.D."/>
            <person name="Shea T.P."/>
            <person name="Benito M.-I."/>
            <person name="Town C.D."/>
            <person name="Fujii C.Y."/>
            <person name="Mason T.M."/>
            <person name="Bowman C.L."/>
            <person name="Barnstead M.E."/>
            <person name="Feldblyum T.V."/>
            <person name="Buell C.R."/>
            <person name="Ketchum K.A."/>
            <person name="Lee J.J."/>
            <person name="Ronning C.M."/>
            <person name="Koo H.L."/>
            <person name="Moffat K.S."/>
            <person name="Cronin L.A."/>
            <person name="Shen M."/>
            <person name="Pai G."/>
            <person name="Van Aken S."/>
            <person name="Umayam L."/>
            <person name="Tallon L.J."/>
            <person name="Gill J.E."/>
            <person name="Adams M.D."/>
            <person name="Carrera A.J."/>
            <person name="Creasy T.H."/>
            <person name="Goodman H.M."/>
            <person name="Somerville C.R."/>
            <person name="Copenhaver G.P."/>
            <person name="Preuss D."/>
            <person name="Nierman W.C."/>
            <person name="White O."/>
            <person name="Eisen J.A."/>
            <person name="Salzberg S.L."/>
            <person name="Fraser C.M."/>
            <person name="Venter J.C."/>
        </authorList>
    </citation>
    <scope>NUCLEOTIDE SEQUENCE [LARGE SCALE GENOMIC DNA]</scope>
    <source>
        <strain>cv. Columbia</strain>
    </source>
</reference>
<reference key="2">
    <citation type="journal article" date="2017" name="Plant J.">
        <title>Araport11: a complete reannotation of the Arabidopsis thaliana reference genome.</title>
        <authorList>
            <person name="Cheng C.Y."/>
            <person name="Krishnakumar V."/>
            <person name="Chan A.P."/>
            <person name="Thibaud-Nissen F."/>
            <person name="Schobel S."/>
            <person name="Town C.D."/>
        </authorList>
    </citation>
    <scope>GENOME REANNOTATION</scope>
    <source>
        <strain>cv. Columbia</strain>
    </source>
</reference>
<reference key="3">
    <citation type="journal article" date="2003" name="Science">
        <title>Empirical analysis of transcriptional activity in the Arabidopsis genome.</title>
        <authorList>
            <person name="Yamada K."/>
            <person name="Lim J."/>
            <person name="Dale J.M."/>
            <person name="Chen H."/>
            <person name="Shinn P."/>
            <person name="Palm C.J."/>
            <person name="Southwick A.M."/>
            <person name="Wu H.C."/>
            <person name="Kim C.J."/>
            <person name="Nguyen M."/>
            <person name="Pham P.K."/>
            <person name="Cheuk R.F."/>
            <person name="Karlin-Newmann G."/>
            <person name="Liu S.X."/>
            <person name="Lam B."/>
            <person name="Sakano H."/>
            <person name="Wu T."/>
            <person name="Yu G."/>
            <person name="Miranda M."/>
            <person name="Quach H.L."/>
            <person name="Tripp M."/>
            <person name="Chang C.H."/>
            <person name="Lee J.M."/>
            <person name="Toriumi M.J."/>
            <person name="Chan M.M."/>
            <person name="Tang C.C."/>
            <person name="Onodera C.S."/>
            <person name="Deng J.M."/>
            <person name="Akiyama K."/>
            <person name="Ansari Y."/>
            <person name="Arakawa T."/>
            <person name="Banh J."/>
            <person name="Banno F."/>
            <person name="Bowser L."/>
            <person name="Brooks S.Y."/>
            <person name="Carninci P."/>
            <person name="Chao Q."/>
            <person name="Choy N."/>
            <person name="Enju A."/>
            <person name="Goldsmith A.D."/>
            <person name="Gurjal M."/>
            <person name="Hansen N.F."/>
            <person name="Hayashizaki Y."/>
            <person name="Johnson-Hopson C."/>
            <person name="Hsuan V.W."/>
            <person name="Iida K."/>
            <person name="Karnes M."/>
            <person name="Khan S."/>
            <person name="Koesema E."/>
            <person name="Ishida J."/>
            <person name="Jiang P.X."/>
            <person name="Jones T."/>
            <person name="Kawai J."/>
            <person name="Kamiya A."/>
            <person name="Meyers C."/>
            <person name="Nakajima M."/>
            <person name="Narusaka M."/>
            <person name="Seki M."/>
            <person name="Sakurai T."/>
            <person name="Satou M."/>
            <person name="Tamse R."/>
            <person name="Vaysberg M."/>
            <person name="Wallender E.K."/>
            <person name="Wong C."/>
            <person name="Yamamura Y."/>
            <person name="Yuan S."/>
            <person name="Shinozaki K."/>
            <person name="Davis R.W."/>
            <person name="Theologis A."/>
            <person name="Ecker J.R."/>
        </authorList>
    </citation>
    <scope>NUCLEOTIDE SEQUENCE [LARGE SCALE MRNA] (ISOFORM 1)</scope>
    <source>
        <strain>cv. Columbia</strain>
    </source>
</reference>
<reference key="4">
    <citation type="submission" date="2002-03" db="EMBL/GenBank/DDBJ databases">
        <title>Full-length cDNA from Arabidopsis thaliana.</title>
        <authorList>
            <person name="Brover V.V."/>
            <person name="Troukhan M.E."/>
            <person name="Alexandrov N.A."/>
            <person name="Lu Y.-P."/>
            <person name="Flavell R.B."/>
            <person name="Feldmann K.A."/>
        </authorList>
    </citation>
    <scope>NUCLEOTIDE SEQUENCE [LARGE SCALE MRNA] (ISOFORM 1)</scope>
</reference>
<reference key="5">
    <citation type="submission" date="2006-07" db="EMBL/GenBank/DDBJ databases">
        <title>Large-scale analysis of RIKEN Arabidopsis full-length (RAFL) cDNAs.</title>
        <authorList>
            <person name="Totoki Y."/>
            <person name="Seki M."/>
            <person name="Ishida J."/>
            <person name="Nakajima M."/>
            <person name="Enju A."/>
            <person name="Kamiya A."/>
            <person name="Narusaka M."/>
            <person name="Shin-i T."/>
            <person name="Nakagawa M."/>
            <person name="Sakamoto N."/>
            <person name="Oishi K."/>
            <person name="Kohara Y."/>
            <person name="Kobayashi M."/>
            <person name="Toyoda A."/>
            <person name="Sakaki Y."/>
            <person name="Sakurai T."/>
            <person name="Iida K."/>
            <person name="Akiyama K."/>
            <person name="Satou M."/>
            <person name="Toyoda T."/>
            <person name="Konagaya A."/>
            <person name="Carninci P."/>
            <person name="Kawai J."/>
            <person name="Hayashizaki Y."/>
            <person name="Shinozaki K."/>
        </authorList>
    </citation>
    <scope>NUCLEOTIDE SEQUENCE [LARGE SCALE MRNA] OF 123-288 (ISOFORM 1)</scope>
    <source>
        <strain>cv. Columbia</strain>
    </source>
</reference>
<reference key="6">
    <citation type="journal article" date="2001" name="Plant Physiol.">
        <title>A superfamily of proteins with novel cysteine-rich repeats.</title>
        <authorList>
            <person name="Chen Z."/>
        </authorList>
    </citation>
    <scope>GENE FAMILY ORGANIZATION</scope>
    <scope>NOMENCLATURE</scope>
    <scope>CAUTION</scope>
</reference>
<reference key="7">
    <citation type="journal article" date="2008" name="Plant Signal. Behav.">
        <title>Symplastic domains in the Arabidopsis shoot apical meristem correlate with PDLP1 expression patterns.</title>
        <authorList>
            <person name="Bayer E."/>
            <person name="Thomas C."/>
            <person name="Maule A."/>
        </authorList>
    </citation>
    <scope>TISSUE SPECIFICITY</scope>
</reference>
<reference key="8">
    <citation type="journal article" date="2008" name="PLoS Biol.">
        <title>Specific targeting of a plasmodesmal protein affecting cell-to-cell communication.</title>
        <authorList>
            <person name="Thomas C.L."/>
            <person name="Bayer E.M."/>
            <person name="Ritzenthaler C."/>
            <person name="Fernandez-Calvino L."/>
            <person name="Maule A.J."/>
        </authorList>
    </citation>
    <scope>SUBCELLULAR LOCATION</scope>
</reference>
<reference key="9">
    <citation type="journal article" date="2010" name="PLoS Pathog.">
        <title>A family of plasmodesmal proteins with receptor-like properties for plant viral movement proteins.</title>
        <authorList>
            <person name="Amari K."/>
            <person name="Boutant E."/>
            <person name="Hofmann C."/>
            <person name="Schmitt-Keichinger C."/>
            <person name="Fernandez-Calvino L."/>
            <person name="Didier P."/>
            <person name="Lerich A."/>
            <person name="Mutterer J."/>
            <person name="Thomas C.L."/>
            <person name="Heinlein M."/>
            <person name="Mely Y."/>
            <person name="Maule A.J."/>
            <person name="Ritzenthaler C."/>
        </authorList>
    </citation>
    <scope>SUBCELLULAR LOCATION</scope>
    <scope>INTERACTION WITH GRAPEVINE FANLEAF VIRUS 2B-MP PROTEIN</scope>
    <source>
        <strain>cv. Columbia</strain>
    </source>
</reference>
<sequence length="288" mass="30204">MFATKTVLFIAVVSLLGTFSSAAVDTFIYGGCSQEKYFPGSPYESNVNSLLTSFVSSASLYTYNNFTTNGISGDSSSVYGLYQCRGDLSSGSGDCARCVARAVSRLGSLCAMASGGALQLEGCFVKYDNTTFLGVEDKTVVVRRCGPPVGYNSDEMTRRDSVVGSLAASSGGSYRVGVSGELQGVAQCTGDLSATECQDCLMEAIGRLRTDCGGAAWGDVYLAKCYARYSARGGHSRANGYGGNRNNNDDDEIEKTLAIIVGLIAGVTLLVVFLSFMAKSCERGKGGK</sequence>
<protein>
    <recommendedName>
        <fullName>Plasmodesmata-located protein 6</fullName>
        <shortName evidence="8">PD-located protein 6</shortName>
    </recommendedName>
    <alternativeName>
        <fullName evidence="7">Cysteine-rich repeat secretory protein 12</fullName>
    </alternativeName>
</protein>
<dbReference type="EMBL" id="AC006069">
    <property type="protein sequence ID" value="AAD12705.2"/>
    <property type="molecule type" value="Genomic_DNA"/>
</dbReference>
<dbReference type="EMBL" id="CP002685">
    <property type="protein sequence ID" value="AEC05480.1"/>
    <property type="molecule type" value="Genomic_DNA"/>
</dbReference>
<dbReference type="EMBL" id="CP002685">
    <property type="protein sequence ID" value="AEC05481.1"/>
    <property type="molecule type" value="Genomic_DNA"/>
</dbReference>
<dbReference type="EMBL" id="AY062817">
    <property type="protein sequence ID" value="AAL32895.1"/>
    <property type="molecule type" value="mRNA"/>
</dbReference>
<dbReference type="EMBL" id="BT006314">
    <property type="protein sequence ID" value="AAP13422.1"/>
    <property type="molecule type" value="mRNA"/>
</dbReference>
<dbReference type="EMBL" id="AY086022">
    <property type="protein sequence ID" value="AAM63232.1"/>
    <property type="molecule type" value="mRNA"/>
</dbReference>
<dbReference type="EMBL" id="AK227616">
    <property type="protein sequence ID" value="BAE99607.1"/>
    <property type="molecule type" value="mRNA"/>
</dbReference>
<dbReference type="PIR" id="E84427">
    <property type="entry name" value="E84427"/>
</dbReference>
<dbReference type="RefSeq" id="NP_565272.1">
    <molecule id="Q9ZU94-1"/>
    <property type="nucleotide sequence ID" value="NM_126227.3"/>
</dbReference>
<dbReference type="RefSeq" id="NP_973394.1">
    <molecule id="Q9ZU94-2"/>
    <property type="nucleotide sequence ID" value="NM_201665.2"/>
</dbReference>
<dbReference type="SMR" id="Q9ZU94"/>
<dbReference type="BioGRID" id="98">
    <property type="interactions" value="7"/>
</dbReference>
<dbReference type="IntAct" id="Q9ZU94">
    <property type="interactions" value="2"/>
</dbReference>
<dbReference type="STRING" id="3702.Q9ZU94"/>
<dbReference type="TCDB" id="1.I.2.1.1">
    <property type="family name" value="the plant plasmodesmata (ppd) family"/>
</dbReference>
<dbReference type="iPTMnet" id="Q9ZU94"/>
<dbReference type="PaxDb" id="3702-AT2G01660.1"/>
<dbReference type="ProteomicsDB" id="224546">
    <molecule id="Q9ZU94-1"/>
</dbReference>
<dbReference type="EnsemblPlants" id="AT2G01660.1">
    <molecule id="Q9ZU94-1"/>
    <property type="protein sequence ID" value="AT2G01660.1"/>
    <property type="gene ID" value="AT2G01660"/>
</dbReference>
<dbReference type="EnsemblPlants" id="AT2G01660.2">
    <molecule id="Q9ZU94-2"/>
    <property type="protein sequence ID" value="AT2G01660.2"/>
    <property type="gene ID" value="AT2G01660"/>
</dbReference>
<dbReference type="GeneID" id="814695"/>
<dbReference type="Gramene" id="AT2G01660.1">
    <molecule id="Q9ZU94-1"/>
    <property type="protein sequence ID" value="AT2G01660.1"/>
    <property type="gene ID" value="AT2G01660"/>
</dbReference>
<dbReference type="Gramene" id="AT2G01660.2">
    <molecule id="Q9ZU94-2"/>
    <property type="protein sequence ID" value="AT2G01660.2"/>
    <property type="gene ID" value="AT2G01660"/>
</dbReference>
<dbReference type="KEGG" id="ath:AT2G01660"/>
<dbReference type="Araport" id="AT2G01660"/>
<dbReference type="TAIR" id="AT2G01660">
    <property type="gene designation" value="PDLP6"/>
</dbReference>
<dbReference type="eggNOG" id="ENOG502QWR4">
    <property type="taxonomic scope" value="Eukaryota"/>
</dbReference>
<dbReference type="HOGENOM" id="CLU_000288_33_0_1"/>
<dbReference type="InParanoid" id="Q9ZU94"/>
<dbReference type="OrthoDB" id="1097929at2759"/>
<dbReference type="PhylomeDB" id="Q9ZU94"/>
<dbReference type="PRO" id="PR:Q9ZU94"/>
<dbReference type="Proteomes" id="UP000006548">
    <property type="component" value="Chromosome 2"/>
</dbReference>
<dbReference type="ExpressionAtlas" id="Q9ZU94">
    <property type="expression patterns" value="baseline and differential"/>
</dbReference>
<dbReference type="GO" id="GO:0005886">
    <property type="term" value="C:plasma membrane"/>
    <property type="evidence" value="ECO:0007669"/>
    <property type="project" value="UniProtKB-SubCell"/>
</dbReference>
<dbReference type="GO" id="GO:0009506">
    <property type="term" value="C:plasmodesma"/>
    <property type="evidence" value="ECO:0000314"/>
    <property type="project" value="TAIR"/>
</dbReference>
<dbReference type="CDD" id="cd23509">
    <property type="entry name" value="Gnk2-like"/>
    <property type="match status" value="2"/>
</dbReference>
<dbReference type="FunFam" id="3.30.430.20:FF:000001">
    <property type="entry name" value="cysteine-rich repeat secretory protein 3"/>
    <property type="match status" value="1"/>
</dbReference>
<dbReference type="FunFam" id="3.30.430.20:FF:000020">
    <property type="entry name" value="Cysteine-rich repeat secretory protein 60"/>
    <property type="match status" value="1"/>
</dbReference>
<dbReference type="Gene3D" id="3.30.430.20">
    <property type="entry name" value="Gnk2 domain, C-X8-C-X2-C motif"/>
    <property type="match status" value="2"/>
</dbReference>
<dbReference type="InterPro" id="IPR051378">
    <property type="entry name" value="Cell2Cell_Antifungal"/>
</dbReference>
<dbReference type="InterPro" id="IPR002902">
    <property type="entry name" value="GNK2"/>
</dbReference>
<dbReference type="InterPro" id="IPR038408">
    <property type="entry name" value="GNK2_sf"/>
</dbReference>
<dbReference type="PANTHER" id="PTHR32080">
    <property type="entry name" value="ANTIFUNGAL PROTEIN GINKBILOBIN-2-LIKE"/>
    <property type="match status" value="1"/>
</dbReference>
<dbReference type="PANTHER" id="PTHR32080:SF31">
    <property type="entry name" value="PLASMODESMATA-LOCATED PROTEIN 6"/>
    <property type="match status" value="1"/>
</dbReference>
<dbReference type="Pfam" id="PF01657">
    <property type="entry name" value="Stress-antifung"/>
    <property type="match status" value="2"/>
</dbReference>
<dbReference type="PROSITE" id="PS51473">
    <property type="entry name" value="GNK2"/>
    <property type="match status" value="2"/>
</dbReference>
<organism>
    <name type="scientific">Arabidopsis thaliana</name>
    <name type="common">Mouse-ear cress</name>
    <dbReference type="NCBI Taxonomy" id="3702"/>
    <lineage>
        <taxon>Eukaryota</taxon>
        <taxon>Viridiplantae</taxon>
        <taxon>Streptophyta</taxon>
        <taxon>Embryophyta</taxon>
        <taxon>Tracheophyta</taxon>
        <taxon>Spermatophyta</taxon>
        <taxon>Magnoliopsida</taxon>
        <taxon>eudicotyledons</taxon>
        <taxon>Gunneridae</taxon>
        <taxon>Pentapetalae</taxon>
        <taxon>rosids</taxon>
        <taxon>malvids</taxon>
        <taxon>Brassicales</taxon>
        <taxon>Brassicaceae</taxon>
        <taxon>Camelineae</taxon>
        <taxon>Arabidopsis</taxon>
    </lineage>
</organism>
<proteinExistence type="evidence at protein level"/>
<evidence type="ECO:0000250" key="1">
    <source>
        <dbReference type="UniProtKB" id="Q8GXV7"/>
    </source>
</evidence>
<evidence type="ECO:0000255" key="2"/>
<evidence type="ECO:0000255" key="3">
    <source>
        <dbReference type="PROSITE-ProRule" id="PRU00806"/>
    </source>
</evidence>
<evidence type="ECO:0000269" key="4">
    <source>
    </source>
</evidence>
<evidence type="ECO:0000269" key="5">
    <source>
    </source>
</evidence>
<evidence type="ECO:0000269" key="6">
    <source>
    </source>
</evidence>
<evidence type="ECO:0000303" key="7">
    <source>
    </source>
</evidence>
<evidence type="ECO:0000303" key="8">
    <source>
    </source>
</evidence>
<evidence type="ECO:0000305" key="9"/>
<evidence type="ECO:0000305" key="10">
    <source>
    </source>
</evidence>
<accession>Q9ZU94</accession>
<accession>Q0WTE1</accession>
<accession>Q3EC88</accession>
<accession>Q8LDG0</accession>
<accession>Q8W466</accession>
<feature type="signal peptide" evidence="2">
    <location>
        <begin position="1"/>
        <end position="22"/>
    </location>
</feature>
<feature type="chain" id="PRO_0000296140" description="Plasmodesmata-located protein 6">
    <location>
        <begin position="23"/>
        <end position="288"/>
    </location>
</feature>
<feature type="topological domain" description="Extracellular" evidence="1">
    <location>
        <begin position="23"/>
        <end position="256"/>
    </location>
</feature>
<feature type="transmembrane region" description="Helical" evidence="2">
    <location>
        <begin position="257"/>
        <end position="277"/>
    </location>
</feature>
<feature type="topological domain" description="Cytoplasmic" evidence="1">
    <location>
        <begin position="278"/>
        <end position="288"/>
    </location>
</feature>
<feature type="domain" description="Gnk2-homologous 1" evidence="3">
    <location>
        <begin position="25"/>
        <end position="132"/>
    </location>
</feature>
<feature type="domain" description="Gnk2-homologous 2" evidence="3">
    <location>
        <begin position="137"/>
        <end position="234"/>
    </location>
</feature>
<feature type="region of interest" description="Necessary and sufficient for plasmodesmal targeting" evidence="1">
    <location>
        <begin position="257"/>
        <end position="277"/>
    </location>
</feature>
<feature type="disulfide bond" evidence="3">
    <location>
        <begin position="32"/>
        <end position="110"/>
    </location>
</feature>
<feature type="disulfide bond" evidence="3">
    <location>
        <begin position="84"/>
        <end position="95"/>
    </location>
</feature>
<feature type="disulfide bond" evidence="3">
    <location>
        <begin position="98"/>
        <end position="123"/>
    </location>
</feature>
<feature type="disulfide bond" evidence="3">
    <location>
        <begin position="145"/>
        <end position="212"/>
    </location>
</feature>
<feature type="disulfide bond" evidence="3">
    <location>
        <begin position="188"/>
        <end position="197"/>
    </location>
</feature>
<feature type="disulfide bond" evidence="3">
    <location>
        <begin position="200"/>
        <end position="225"/>
    </location>
</feature>
<feature type="splice variant" id="VSP_054963" description="In isoform 2." evidence="9">
    <original>GNRNNNDDDEIEKTLAI</original>
    <variation>NVFFAPLLFISFIKIFI</variation>
    <location>
        <begin position="243"/>
        <end position="259"/>
    </location>
</feature>
<feature type="splice variant" id="VSP_054964" description="In isoform 2." evidence="9">
    <location>
        <begin position="260"/>
        <end position="288"/>
    </location>
</feature>
<feature type="sequence conflict" description="In Ref. 4; AAM63232." evidence="9" ref="4">
    <original>E</original>
    <variation>A</variation>
    <location>
        <position position="35"/>
    </location>
</feature>
<feature type="sequence conflict" description="In Ref. 4; AAM63232." evidence="9" ref="4">
    <original>P</original>
    <variation>Q</variation>
    <location>
        <position position="39"/>
    </location>
</feature>
<feature type="sequence conflict" description="In Ref. 4; AAM63232." evidence="9" ref="4">
    <original>T</original>
    <variation>A</variation>
    <location>
        <position position="68"/>
    </location>
</feature>
<feature type="sequence conflict" description="In Ref. 4; AAM63232." evidence="9" ref="4">
    <original>S</original>
    <variation>SS</variation>
    <location>
        <position position="77"/>
    </location>
</feature>
<comment type="function">
    <text evidence="1">Modulates cell-to-cell trafficking.</text>
</comment>
<comment type="subunit">
    <text evidence="10">(Microbial infection) Interacts with Grapevine fanleaf virus (GFLV) 2B-MP.</text>
</comment>
<comment type="subcellular location">
    <subcellularLocation>
        <location evidence="1">Cell membrane</location>
        <topology evidence="1">Single-pass type I membrane protein</topology>
    </subcellularLocation>
    <subcellularLocation>
        <location evidence="4 6">Cell junction</location>
        <location evidence="4 6">Plasmodesma</location>
    </subcellularLocation>
    <text>Co-localizes with the Grapevine fanleaf virus (GFLV) 2B-MP at the base of tubules within modified plasmodesmata.</text>
</comment>
<comment type="alternative products">
    <event type="alternative splicing"/>
    <isoform>
        <id>Q9ZU94-1</id>
        <name>1</name>
        <sequence type="displayed"/>
    </isoform>
    <isoform>
        <id>Q9ZU94-2</id>
        <name>2</name>
        <sequence type="described" ref="VSP_054963 VSP_054964"/>
    </isoform>
    <text>A number of isoforms are produced. According to EST sequences.</text>
</comment>
<comment type="tissue specificity">
    <text evidence="5">Highly expressed in inflorescence silique (at mRNA level).</text>
</comment>
<comment type="similarity">
    <text evidence="9">Belongs to the cysteine-rich repeat secretory protein family. Plasmodesmata-located proteins (PDLD) subfamily.</text>
</comment>
<comment type="caution">
    <text evidence="9">PDLPs were initially named Cysteine-rich secretory proteins based on a classification work that failed to predict the transmembrane region at the C-terminus (PubMed:11402176). However, it was later shown that PDLPs are membrane proteins.</text>
</comment>
<name>PDLP6_ARATH</name>
<keyword id="KW-0025">Alternative splicing</keyword>
<keyword id="KW-0965">Cell junction</keyword>
<keyword id="KW-1003">Cell membrane</keyword>
<keyword id="KW-1015">Disulfide bond</keyword>
<keyword id="KW-0945">Host-virus interaction</keyword>
<keyword id="KW-0472">Membrane</keyword>
<keyword id="KW-1185">Reference proteome</keyword>
<keyword id="KW-0677">Repeat</keyword>
<keyword id="KW-0732">Signal</keyword>
<keyword id="KW-0812">Transmembrane</keyword>
<keyword id="KW-1133">Transmembrane helix</keyword>
<keyword id="KW-0813">Transport</keyword>